<dbReference type="EMBL" id="U47946">
    <property type="protein sequence ID" value="AAC60215.1"/>
    <property type="molecule type" value="Genomic_DNA"/>
</dbReference>
<dbReference type="SMR" id="Q91197"/>
<dbReference type="OrthoDB" id="5061070at2759"/>
<dbReference type="Proteomes" id="UP000694395">
    <property type="component" value="Unplaced"/>
</dbReference>
<dbReference type="GO" id="GO:0005829">
    <property type="term" value="C:cytosol"/>
    <property type="evidence" value="ECO:0000315"/>
    <property type="project" value="AgBase"/>
</dbReference>
<dbReference type="GO" id="GO:0005874">
    <property type="term" value="C:microtubule"/>
    <property type="evidence" value="ECO:0007669"/>
    <property type="project" value="TreeGrafter"/>
</dbReference>
<dbReference type="GO" id="GO:0005634">
    <property type="term" value="C:nucleus"/>
    <property type="evidence" value="ECO:0007669"/>
    <property type="project" value="TreeGrafter"/>
</dbReference>
<dbReference type="GO" id="GO:0005886">
    <property type="term" value="C:plasma membrane"/>
    <property type="evidence" value="ECO:0007669"/>
    <property type="project" value="TreeGrafter"/>
</dbReference>
<dbReference type="GO" id="GO:0098793">
    <property type="term" value="C:presynapse"/>
    <property type="evidence" value="ECO:0007669"/>
    <property type="project" value="GOC"/>
</dbReference>
<dbReference type="GO" id="GO:0005525">
    <property type="term" value="F:GTP binding"/>
    <property type="evidence" value="ECO:0007669"/>
    <property type="project" value="UniProtKB-KW"/>
</dbReference>
<dbReference type="GO" id="GO:0003924">
    <property type="term" value="F:GTPase activity"/>
    <property type="evidence" value="ECO:0007669"/>
    <property type="project" value="InterPro"/>
</dbReference>
<dbReference type="GO" id="GO:0008017">
    <property type="term" value="F:microtubule binding"/>
    <property type="evidence" value="ECO:0007669"/>
    <property type="project" value="TreeGrafter"/>
</dbReference>
<dbReference type="GO" id="GO:0051607">
    <property type="term" value="P:defense response to virus"/>
    <property type="evidence" value="ECO:0007669"/>
    <property type="project" value="TreeGrafter"/>
</dbReference>
<dbReference type="GO" id="GO:0031623">
    <property type="term" value="P:receptor internalization"/>
    <property type="evidence" value="ECO:0007669"/>
    <property type="project" value="TreeGrafter"/>
</dbReference>
<dbReference type="GO" id="GO:0034340">
    <property type="term" value="P:response to type I interferon"/>
    <property type="evidence" value="ECO:0000250"/>
    <property type="project" value="AgBase"/>
</dbReference>
<dbReference type="GO" id="GO:0016185">
    <property type="term" value="P:synaptic vesicle budding from presynaptic endocytic zone membrane"/>
    <property type="evidence" value="ECO:0007669"/>
    <property type="project" value="TreeGrafter"/>
</dbReference>
<dbReference type="CDD" id="cd08771">
    <property type="entry name" value="DLP_1"/>
    <property type="match status" value="1"/>
</dbReference>
<dbReference type="FunFam" id="1.20.120.1240:FF:000007">
    <property type="entry name" value="Interferon-induced GTP-binding protein Mx1"/>
    <property type="match status" value="1"/>
</dbReference>
<dbReference type="FunFam" id="3.40.50.300:FF:000621">
    <property type="entry name" value="Interferon-induced GTP-binding protein Mx1"/>
    <property type="match status" value="1"/>
</dbReference>
<dbReference type="Gene3D" id="1.20.120.1240">
    <property type="entry name" value="Dynamin, middle domain"/>
    <property type="match status" value="1"/>
</dbReference>
<dbReference type="Gene3D" id="3.40.50.300">
    <property type="entry name" value="P-loop containing nucleotide triphosphate hydrolases"/>
    <property type="match status" value="1"/>
</dbReference>
<dbReference type="InterPro" id="IPR022812">
    <property type="entry name" value="Dynamin"/>
</dbReference>
<dbReference type="InterPro" id="IPR001401">
    <property type="entry name" value="Dynamin_GTPase"/>
</dbReference>
<dbReference type="InterPro" id="IPR019762">
    <property type="entry name" value="Dynamin_GTPase_CS"/>
</dbReference>
<dbReference type="InterPro" id="IPR045063">
    <property type="entry name" value="Dynamin_N"/>
</dbReference>
<dbReference type="InterPro" id="IPR000375">
    <property type="entry name" value="Dynamin_stalk"/>
</dbReference>
<dbReference type="InterPro" id="IPR030381">
    <property type="entry name" value="G_DYNAMIN_dom"/>
</dbReference>
<dbReference type="InterPro" id="IPR003130">
    <property type="entry name" value="GED"/>
</dbReference>
<dbReference type="InterPro" id="IPR020850">
    <property type="entry name" value="GED_dom"/>
</dbReference>
<dbReference type="InterPro" id="IPR027417">
    <property type="entry name" value="P-loop_NTPase"/>
</dbReference>
<dbReference type="PANTHER" id="PTHR11566">
    <property type="entry name" value="DYNAMIN"/>
    <property type="match status" value="1"/>
</dbReference>
<dbReference type="PANTHER" id="PTHR11566:SF225">
    <property type="entry name" value="INTERFERON-INDUCED GTP-BINDING PROTEIN MX-RELATED"/>
    <property type="match status" value="1"/>
</dbReference>
<dbReference type="Pfam" id="PF01031">
    <property type="entry name" value="Dynamin_M"/>
    <property type="match status" value="1"/>
</dbReference>
<dbReference type="Pfam" id="PF00350">
    <property type="entry name" value="Dynamin_N"/>
    <property type="match status" value="1"/>
</dbReference>
<dbReference type="Pfam" id="PF02212">
    <property type="entry name" value="GED"/>
    <property type="match status" value="1"/>
</dbReference>
<dbReference type="PRINTS" id="PR00195">
    <property type="entry name" value="DYNAMIN"/>
</dbReference>
<dbReference type="SMART" id="SM00053">
    <property type="entry name" value="DYNc"/>
    <property type="match status" value="1"/>
</dbReference>
<dbReference type="SMART" id="SM00302">
    <property type="entry name" value="GED"/>
    <property type="match status" value="1"/>
</dbReference>
<dbReference type="SUPFAM" id="SSF52540">
    <property type="entry name" value="P-loop containing nucleoside triphosphate hydrolases"/>
    <property type="match status" value="1"/>
</dbReference>
<dbReference type="PROSITE" id="PS00410">
    <property type="entry name" value="G_DYNAMIN_1"/>
    <property type="match status" value="1"/>
</dbReference>
<dbReference type="PROSITE" id="PS51718">
    <property type="entry name" value="G_DYNAMIN_2"/>
    <property type="match status" value="1"/>
</dbReference>
<dbReference type="PROSITE" id="PS51388">
    <property type="entry name" value="GED"/>
    <property type="match status" value="1"/>
</dbReference>
<keyword id="KW-0963">Cytoplasm</keyword>
<keyword id="KW-0342">GTP-binding</keyword>
<keyword id="KW-0547">Nucleotide-binding</keyword>
<reference evidence="7 8" key="1">
    <citation type="journal article" date="1997" name="J. Virol.">
        <title>Cloning of the rainbow trout (Oncorhynchus mykiss) Mx2 and Mx3 cDNAs and characterization of trout Mx protein expression in salmon cells.</title>
        <authorList>
            <person name="Trobridge G.D."/>
            <person name="Chiou P.P."/>
            <person name="Leong J.A."/>
        </authorList>
    </citation>
    <scope>NUCLEOTIDE SEQUENCE [MRNA]</scope>
    <scope>FUNCTION</scope>
    <scope>SUBCELLULAR LOCATION</scope>
</reference>
<reference evidence="7" key="2">
    <citation type="journal article" date="2007" name="Fish Shellfish Immunol.">
        <title>In vitro and in vivo differential expression of rainbow trout (Oncorhynchus mykiss) Mx isoforms in response to viral haemorrhagic septicaemia virus (VHSV) G gene, poly I:C and VHSV.</title>
        <authorList>
            <person name="Tafalla C."/>
            <person name="Chico V."/>
            <person name="Perez L."/>
            <person name="Coll J.M."/>
            <person name="Estepa A."/>
        </authorList>
    </citation>
    <scope>INDUCTION</scope>
</reference>
<organism>
    <name type="scientific">Oncorhynchus mykiss</name>
    <name type="common">Rainbow trout</name>
    <name type="synonym">Salmo gairdneri</name>
    <dbReference type="NCBI Taxonomy" id="8022"/>
    <lineage>
        <taxon>Eukaryota</taxon>
        <taxon>Metazoa</taxon>
        <taxon>Chordata</taxon>
        <taxon>Craniata</taxon>
        <taxon>Vertebrata</taxon>
        <taxon>Euteleostomi</taxon>
        <taxon>Actinopterygii</taxon>
        <taxon>Neopterygii</taxon>
        <taxon>Teleostei</taxon>
        <taxon>Protacanthopterygii</taxon>
        <taxon>Salmoniformes</taxon>
        <taxon>Salmonidae</taxon>
        <taxon>Salmoninae</taxon>
        <taxon>Oncorhynchus</taxon>
    </lineage>
</organism>
<gene>
    <name evidence="6" type="primary">mx3</name>
</gene>
<comment type="function">
    <text evidence="5">Does not inhibit strain RB-1 of the fish pathogen, infectious hematopoietic necrosis virus (IHNV).</text>
</comment>
<comment type="subcellular location">
    <subcellularLocation>
        <location evidence="5">Cytoplasm</location>
    </subcellularLocation>
    <text evidence="5">Displays diffuse uniform expression throughout the cytoplasm.</text>
</comment>
<comment type="induction">
    <text evidence="4">By polyinosinic-polycytidylic acid (poly I:C) and viral haemorrhagic septicaemia virus (VHSV) strain 07.71 in muscle, head kidney, spleen and liver.</text>
</comment>
<comment type="similarity">
    <text evidence="3">Belongs to the TRAFAC class dynamin-like GTPase superfamily. Dynamin/Fzo/YdjA family.</text>
</comment>
<feature type="chain" id="PRO_0000430326" description="Interferon-induced GTP-binding protein Mx3">
    <location>
        <begin position="1"/>
        <end position="623"/>
    </location>
</feature>
<feature type="domain" description="Dynamin-type G" evidence="3">
    <location>
        <begin position="31"/>
        <end position="304"/>
    </location>
</feature>
<feature type="domain" description="GED" evidence="2">
    <location>
        <begin position="537"/>
        <end position="623"/>
    </location>
</feature>
<feature type="region of interest" description="G1 motif" evidence="3">
    <location>
        <begin position="41"/>
        <end position="48"/>
    </location>
</feature>
<feature type="region of interest" description="G2 motif" evidence="3">
    <location>
        <begin position="66"/>
        <end position="68"/>
    </location>
</feature>
<feature type="region of interest" description="G3 motif" evidence="3">
    <location>
        <begin position="142"/>
        <end position="145"/>
    </location>
</feature>
<feature type="region of interest" description="G4 motif" evidence="3">
    <location>
        <begin position="211"/>
        <end position="214"/>
    </location>
</feature>
<feature type="region of interest" description="G5 motif" evidence="3">
    <location>
        <begin position="243"/>
        <end position="246"/>
    </location>
</feature>
<feature type="binding site" evidence="1">
    <location>
        <begin position="41"/>
        <end position="48"/>
    </location>
    <ligand>
        <name>GTP</name>
        <dbReference type="ChEBI" id="CHEBI:37565"/>
    </ligand>
</feature>
<feature type="binding site" evidence="1">
    <location>
        <begin position="142"/>
        <end position="146"/>
    </location>
    <ligand>
        <name>GTP</name>
        <dbReference type="ChEBI" id="CHEBI:37565"/>
    </ligand>
</feature>
<feature type="binding site" evidence="1">
    <location>
        <begin position="211"/>
        <end position="214"/>
    </location>
    <ligand>
        <name>GTP</name>
        <dbReference type="ChEBI" id="CHEBI:37565"/>
    </ligand>
</feature>
<proteinExistence type="evidence at transcript level"/>
<accession>Q91197</accession>
<evidence type="ECO:0000255" key="1"/>
<evidence type="ECO:0000255" key="2">
    <source>
        <dbReference type="PROSITE-ProRule" id="PRU00720"/>
    </source>
</evidence>
<evidence type="ECO:0000255" key="3">
    <source>
        <dbReference type="PROSITE-ProRule" id="PRU01055"/>
    </source>
</evidence>
<evidence type="ECO:0000269" key="4">
    <source>
    </source>
</evidence>
<evidence type="ECO:0000269" key="5">
    <source>
    </source>
</evidence>
<evidence type="ECO:0000303" key="6">
    <source>
    </source>
</evidence>
<evidence type="ECO:0000305" key="7"/>
<evidence type="ECO:0000312" key="8">
    <source>
        <dbReference type="EMBL" id="AAC60215.1"/>
    </source>
</evidence>
<sequence length="623" mass="70962">MNNTLNQHYEEKVRPCIDLIDSLRSLGVEKDLALPAIAVIGDQSSGKSSVLEALSGVALPRGSGIVTRCPLELKMKRKREGEEWHGKISYQDHEEEIEDPSDVEKKIREAQDEMAGVGVGISDDLISLEIGSPDVPDLTLIDLPGIARVAVKGQPENIGEQIKRLIRKFIMKQETINLVVVPCNVDIATTEALQMAQEVDPEGERTLGILTKPDLVDKGTEETVVDIVHNEVIHLTKGYMIVKCRGQKEIMERVSLTEATEREKAFFKEHAHLSTLYDEGHATIPKLAEKLTLELVHHIEKSLPRLEEQIEAKLSETHAELERYGTGPPEDSAERIYFLIDKVTAFTQDAINLSTGEELKSGVRLNVFSTLRQEFGKWKLHLDRSGENFNQRIEGEVSNYEKTYRGRELPGFINYKTFEVMVKDQIKQLEEPAVKKLKEISDAVRKVFLLLAQSSFTGFPNLLKSAKTKIEAIKQVNESTAESMLRTQFKMEMIVYTQDSTYSHSLSERKREEEDDRPLPTPKIRSTIFSTDNHATLQEMMLHLKSYYRISSQRLADQIPMVIRYLVLQEFASQLQREMLQTLQEKDNIEQLLKEDFDIGSKRAALQNKLKRLMKARSYLVEF</sequence>
<protein>
    <recommendedName>
        <fullName>Interferon-induced GTP-binding protein Mx3</fullName>
        <shortName evidence="6 8">RBTMx3</shortName>
    </recommendedName>
</protein>
<name>MX3_ONCMY</name>